<protein>
    <recommendedName>
        <fullName>DNA-directed RNA polymerase V subunit 1</fullName>
    </recommendedName>
    <alternativeName>
        <fullName>DNA-directed RNA polymerase D subunit 1b</fullName>
        <shortName>AtNRPD1b</shortName>
        <shortName>Nuclear RNA polymerase D 1b</shortName>
    </alternativeName>
    <alternativeName>
        <fullName>DNA-directed RNA polymerase E subunit 1</fullName>
        <shortName>Nuclear RNA polymerase E 1</shortName>
        <ecNumber>2.7.7.6</ecNumber>
    </alternativeName>
    <alternativeName>
        <fullName>Protein DEFECTIVE IN MERISTEM SILENCING 5</fullName>
    </alternativeName>
    <alternativeName>
        <fullName>Protein DEFECTIVE IN RNA-DIRECTED DNA METHYLATION 3</fullName>
    </alternativeName>
    <alternativeName>
        <fullName>Protein RNA-DIRECTED DNA METHYLATION DEFECTIVE 1</fullName>
    </alternativeName>
    <alternativeName>
        <fullName>RNA polymerase IV subunit 1</fullName>
        <shortName>POL IV 1</shortName>
    </alternativeName>
</protein>
<accession>Q5D869</accession>
<accession>O04206</accession>
<accession>O04207</accession>
<accession>Q1L5X4</accession>
<reference key="1">
    <citation type="journal article" date="2005" name="Genes Dev.">
        <title>Reinforcement of silencing at transposons and highly repeated sequences requires the concerted action of two distinct RNA polymerases IV in Arabidopsis.</title>
        <authorList>
            <person name="Pontier D."/>
            <person name="Yahubyan G."/>
            <person name="Vega D."/>
            <person name="Bulski A."/>
            <person name="Saez-Vasquez J."/>
            <person name="Hakimi M.-A."/>
            <person name="Lerbs-Mache S."/>
            <person name="Colot V."/>
            <person name="Lagrange T."/>
        </authorList>
    </citation>
    <scope>NUCLEOTIDE SEQUENCE [MRNA]</scope>
    <scope>FUNCTION</scope>
    <scope>DISRUPTION PHENOTYPE</scope>
    <scope>SUBUNIT</scope>
    <scope>SUBCELLULAR LOCATION</scope>
    <scope>TISSUE SPECIFICITY</scope>
</reference>
<reference key="2">
    <citation type="journal article" date="2005" name="Nat. Genet.">
        <title>Atypical RNA polymerase subunits required for RNA-directed DNA methylation.</title>
        <authorList>
            <person name="Kanno T."/>
            <person name="Huettel B."/>
            <person name="Mette M.F."/>
            <person name="Aufsatz W."/>
            <person name="Jaligot E."/>
            <person name="Daxinger L."/>
            <person name="Kreil D.P."/>
            <person name="Matzke M."/>
            <person name="Matzke A.J.M."/>
        </authorList>
    </citation>
    <scope>NUCLEOTIDE SEQUENCE [MRNA]</scope>
    <scope>FUNCTION</scope>
    <scope>DISRUPTION PHENOTYPE</scope>
    <source>
        <strain>cv. Columbia</strain>
    </source>
</reference>
<reference key="3">
    <citation type="journal article" date="2007" name="J. Mol. Evol.">
        <title>A multistep process gave rise to RNA polymerase IV of land plants.</title>
        <authorList>
            <person name="Luo J."/>
            <person name="Hall B.D."/>
        </authorList>
    </citation>
    <scope>NUCLEOTIDE SEQUENCE [MRNA]</scope>
    <scope>TISSUE SPECIFICITY</scope>
</reference>
<reference key="4">
    <citation type="journal article" date="1999" name="Nature">
        <title>Sequence and analysis of chromosome 2 of the plant Arabidopsis thaliana.</title>
        <authorList>
            <person name="Lin X."/>
            <person name="Kaul S."/>
            <person name="Rounsley S.D."/>
            <person name="Shea T.P."/>
            <person name="Benito M.-I."/>
            <person name="Town C.D."/>
            <person name="Fujii C.Y."/>
            <person name="Mason T.M."/>
            <person name="Bowman C.L."/>
            <person name="Barnstead M.E."/>
            <person name="Feldblyum T.V."/>
            <person name="Buell C.R."/>
            <person name="Ketchum K.A."/>
            <person name="Lee J.J."/>
            <person name="Ronning C.M."/>
            <person name="Koo H.L."/>
            <person name="Moffat K.S."/>
            <person name="Cronin L.A."/>
            <person name="Shen M."/>
            <person name="Pai G."/>
            <person name="Van Aken S."/>
            <person name="Umayam L."/>
            <person name="Tallon L.J."/>
            <person name="Gill J.E."/>
            <person name="Adams M.D."/>
            <person name="Carrera A.J."/>
            <person name="Creasy T.H."/>
            <person name="Goodman H.M."/>
            <person name="Somerville C.R."/>
            <person name="Copenhaver G.P."/>
            <person name="Preuss D."/>
            <person name="Nierman W.C."/>
            <person name="White O."/>
            <person name="Eisen J.A."/>
            <person name="Salzberg S.L."/>
            <person name="Fraser C.M."/>
            <person name="Venter J.C."/>
        </authorList>
    </citation>
    <scope>NUCLEOTIDE SEQUENCE [LARGE SCALE GENOMIC DNA]</scope>
    <source>
        <strain>cv. Columbia</strain>
    </source>
</reference>
<reference key="5">
    <citation type="journal article" date="2017" name="Plant J.">
        <title>Araport11: a complete reannotation of the Arabidopsis thaliana reference genome.</title>
        <authorList>
            <person name="Cheng C.Y."/>
            <person name="Krishnakumar V."/>
            <person name="Chan A.P."/>
            <person name="Thibaud-Nissen F."/>
            <person name="Schobel S."/>
            <person name="Town C.D."/>
        </authorList>
    </citation>
    <scope>GENOME REANNOTATION</scope>
    <source>
        <strain>cv. Columbia</strain>
    </source>
</reference>
<reference key="6">
    <citation type="journal article" date="2005" name="Cell">
        <title>Plant nuclear RNA polymerase IV mediates siRNA and DNA methylation-dependent heterochromatin formation.</title>
        <authorList>
            <person name="Onodera Y."/>
            <person name="Haag J.R."/>
            <person name="Ream T."/>
            <person name="Nunes P.C."/>
            <person name="Pontes O."/>
            <person name="Pikaard C.S."/>
        </authorList>
    </citation>
    <scope>FUNCTION</scope>
    <scope>DISRUPTION PHENOTYPE</scope>
</reference>
<reference key="7">
    <citation type="journal article" date="2006" name="Cell">
        <title>The Arabidopsis chromatin-modifying nuclear siRNA pathway involves a nucleolar RNA processing center.</title>
        <authorList>
            <person name="Pontes O."/>
            <person name="Li C.F."/>
            <person name="Nunes P.C."/>
            <person name="Haag J."/>
            <person name="Ream T."/>
            <person name="Vitins A."/>
            <person name="Jacobsen S.E."/>
            <person name="Pikaard C.S."/>
        </authorList>
    </citation>
    <scope>FUNCTION</scope>
    <scope>DISRUPTION PHENOTYPE</scope>
    <scope>SUBCELLULAR LOCATION</scope>
    <scope>INTERACTION WITH NRPD2A</scope>
</reference>
<reference key="8">
    <citation type="journal article" date="2006" name="Cell">
        <title>An ARGONAUTE4-containing nuclear processing center colocalized with Cajal bodies in Arabidopsis thaliana.</title>
        <authorList>
            <person name="Li C.F."/>
            <person name="Pontes O."/>
            <person name="El-Shami M."/>
            <person name="Henderson I.R."/>
            <person name="Bernatavichute Y.V."/>
            <person name="Chan S.W.-L."/>
            <person name="Lagrange T."/>
            <person name="Pikaard C.S."/>
            <person name="Jacobsen S.E."/>
        </authorList>
    </citation>
    <scope>INTERACTION WITH AGO4</scope>
    <scope>SUBCELLULAR LOCATION</scope>
</reference>
<reference key="9">
    <citation type="journal article" date="2007" name="Biochim. Biophys. Acta">
        <title>RNA-directed DNA methylation mediated by DRD1 and Pol IVb: a versatile pathway for transcriptional gene silencing in plants.</title>
        <authorList>
            <person name="Huettel B."/>
            <person name="Kanno T."/>
            <person name="Daxinger L."/>
            <person name="Bucher E."/>
            <person name="van der Winden J."/>
            <person name="Matzke A.J.M."/>
            <person name="Matzke M."/>
        </authorList>
    </citation>
    <scope>REVIEW</scope>
</reference>
<reference key="10">
    <citation type="journal article" date="2007" name="Proc. Natl. Acad. Sci. U.S.A.">
        <title>Role of RNA polymerase IV in plant small RNA metabolism.</title>
        <authorList>
            <person name="Zhang X."/>
            <person name="Henderson I.R."/>
            <person name="Lu C."/>
            <person name="Green P.J."/>
            <person name="Jacobsen S.E."/>
        </authorList>
    </citation>
    <scope>FUNCTION</scope>
    <source>
        <strain>cv. Columbia</strain>
    </source>
</reference>
<reference key="11">
    <citation type="journal article" date="2008" name="Nat. Genet.">
        <title>A structural-maintenance-of-chromosomes hinge domain-containing protein is required for RNA-directed DNA methylation.</title>
        <authorList>
            <person name="Kanno T."/>
            <person name="Bucher E."/>
            <person name="Daxinger L."/>
            <person name="Huettel B."/>
            <person name="Boehmdorfer G."/>
            <person name="Gregor W."/>
            <person name="Kreil D.P."/>
            <person name="Matzke M."/>
            <person name="Matzke A.J."/>
        </authorList>
    </citation>
    <scope>FUNCTION</scope>
    <scope>DISRUPTION PHENOTYPE</scope>
    <source>
        <strain>cv. Columbia</strain>
    </source>
</reference>
<reference key="12">
    <citation type="journal article" date="2008" name="Plant J.">
        <title>NRPD1a and NRPD1b are required to maintain post-transcriptional RNA silencing and RNA-directed DNA methylation in Arabidopsis.</title>
        <authorList>
            <person name="Eamens A."/>
            <person name="Vaistij F.E."/>
            <person name="Jones L."/>
        </authorList>
    </citation>
    <scope>FUNCTION</scope>
    <scope>DISRUPTION PHENOTYPE</scope>
</reference>
<reference key="13">
    <citation type="journal article" date="2008" name="Proc. Natl. Acad. Sci. U.S.A.">
        <title>PolIVb influences RNA-directed DNA methylation independently of its role in siRNA biogenesis.</title>
        <authorList>
            <person name="Mosher R.A."/>
            <person name="Schwach F."/>
            <person name="Studholme D."/>
            <person name="Baulcombe D.C."/>
        </authorList>
    </citation>
    <scope>FUNCTION</scope>
    <scope>DISRUPTION PHENOTYPE</scope>
    <source>
        <strain>cv. Columbia</strain>
    </source>
</reference>
<reference key="14">
    <citation type="journal article" date="2008" name="Plant Physiol.">
        <title>Comparative transcriptomics of Arabidopsis sperm cells.</title>
        <authorList>
            <person name="Borges F."/>
            <person name="Gomes G."/>
            <person name="Gardner R."/>
            <person name="Moreno N."/>
            <person name="McCormick S."/>
            <person name="Feijo J.A."/>
            <person name="Becker J.D."/>
        </authorList>
    </citation>
    <scope>TISSUE SPECIFICITY</scope>
</reference>
<reference key="15">
    <citation type="journal article" date="2009" name="Genes Dev.">
        <title>NRPD4, a protein related to the RPB4 subunit of RNA polymerase II, is a component of RNA polymerases IV and V and is required for RNA-directed DNA methylation.</title>
        <authorList>
            <person name="He X.-J."/>
            <person name="Hsu Y.-F."/>
            <person name="Pontes O."/>
            <person name="Zhu J."/>
            <person name="Lu J."/>
            <person name="Bressan R.A."/>
            <person name="Pikaard C."/>
            <person name="Wang C.-S."/>
            <person name="Zhu J.-K."/>
        </authorList>
    </citation>
    <scope>INTERACTION WITH NRPD4</scope>
    <scope>SUBCELLULAR LOCATION</scope>
</reference>
<reference key="16">
    <citation type="journal article" date="2009" name="Mol. Cell">
        <title>Subunit compositions of the RNA-silencing enzymes Pol IV and Pol V reveal their origins as specialized forms of RNA polymerase II.</title>
        <authorList>
            <person name="Ream T.S."/>
            <person name="Haag J.R."/>
            <person name="Wierzbicki A.T."/>
            <person name="Nicora C.D."/>
            <person name="Norbeck A.D."/>
            <person name="Zhu J.K."/>
            <person name="Hagen G."/>
            <person name="Guilfoyle T.J."/>
            <person name="Pasa-Tolic L."/>
            <person name="Pikaard C.S."/>
        </authorList>
    </citation>
    <scope>FUNCTION</scope>
    <scope>IDENTIFICATION BY MASS SPECTROMETRY</scope>
    <scope>DISRUPTION PHENOTYPE</scope>
    <scope>GENE FAMILY</scope>
    <scope>SUBUNIT</scope>
    <scope>NOMENCLATURE</scope>
</reference>
<reference key="17">
    <citation type="journal article" date="2009" name="Proc. Natl. Acad. Sci. U.S.A.">
        <title>PolV(PolIVb) function in RNA-directed DNA methylation requires the conserved active site and an additional plant-specific subunit.</title>
        <authorList>
            <person name="Lahmy S."/>
            <person name="Pontier D."/>
            <person name="Cavel E."/>
            <person name="Vega D."/>
            <person name="El-Shami M."/>
            <person name="Kanno T."/>
            <person name="Lagrange T."/>
        </authorList>
    </citation>
    <scope>FUNCTION</scope>
    <scope>MUTAGENESIS OF ASP-451</scope>
</reference>
<reference key="18">
    <citation type="journal article" date="2010" name="Nucleic Acids Res.">
        <title>Genome-wide computational identification of WG/GW Argonaute-binding proteins in Arabidopsis.</title>
        <authorList>
            <person name="Karlowski W.M."/>
            <person name="Zielezinski A."/>
            <person name="Carrere J."/>
            <person name="Pontier D."/>
            <person name="Lagrange T."/>
            <person name="Cooke R."/>
        </authorList>
    </citation>
    <scope>WG/GW REPEATS</scope>
</reference>
<reference key="19">
    <citation type="journal article" date="2011" name="Epigenetics">
        <title>Identification of genes required for de novo DNA methylation in Arabidopsis.</title>
        <authorList>
            <person name="Greenberg M.V."/>
            <person name="Ausin I."/>
            <person name="Chan S.W."/>
            <person name="Cokus S.J."/>
            <person name="Cuperus J.T."/>
            <person name="Feng S."/>
            <person name="Law J.A."/>
            <person name="Chu C."/>
            <person name="Pellegrini M."/>
            <person name="Carrington J.C."/>
            <person name="Jacobsen S.E."/>
        </authorList>
    </citation>
    <scope>FUNCTION</scope>
    <scope>MUTAGENESIS OF GLY-49</scope>
    <scope>DISRUPTION PHENOTYPE</scope>
</reference>
<reference key="20">
    <citation type="journal article" date="2014" name="Nature">
        <title>SRA- and SET-domain-containing proteins link RNA polymerase V occupancy to DNA methylation.</title>
        <authorList>
            <person name="Johnson L.M."/>
            <person name="Du J."/>
            <person name="Hale C.J."/>
            <person name="Bischof S."/>
            <person name="Feng S."/>
            <person name="Chodavarapu R.K."/>
            <person name="Zhong X."/>
            <person name="Marson G."/>
            <person name="Pellegrini M."/>
            <person name="Segal D.J."/>
            <person name="Patel D.J."/>
            <person name="Jacobsen S.E."/>
        </authorList>
    </citation>
    <scope>FUNCTION</scope>
    <scope>INTERACTION WITH SUVH2</scope>
</reference>
<keyword id="KW-0002">3D-structure</keyword>
<keyword id="KW-0240">DNA-directed RNA polymerase</keyword>
<keyword id="KW-0460">Magnesium</keyword>
<keyword id="KW-0479">Metal-binding</keyword>
<keyword id="KW-0548">Nucleotidyltransferase</keyword>
<keyword id="KW-0539">Nucleus</keyword>
<keyword id="KW-1185">Reference proteome</keyword>
<keyword id="KW-0677">Repeat</keyword>
<keyword id="KW-0804">Transcription</keyword>
<keyword id="KW-0805">Transcription regulation</keyword>
<keyword id="KW-0808">Transferase</keyword>
<keyword id="KW-0862">Zinc</keyword>
<name>NRPE1_ARATH</name>
<gene>
    <name type="primary">NRPE1</name>
    <name type="synonym">DMS5</name>
    <name type="synonym">DRD3</name>
    <name type="synonym">NRPD1b</name>
    <name type="synonym">RMD1</name>
    <name type="synonym">RPE1</name>
    <name type="ordered locus">At2g40030</name>
    <name type="ORF">T28M21.19</name>
</gene>
<feature type="chain" id="PRO_0000407923" description="DNA-directed RNA polymerase V subunit 1">
    <location>
        <begin position="1"/>
        <end position="1976"/>
    </location>
</feature>
<feature type="repeat" description="1" evidence="18">
    <location>
        <begin position="1215"/>
        <end position="1216"/>
    </location>
</feature>
<feature type="repeat" description="2" evidence="18">
    <location>
        <begin position="1329"/>
        <end position="1330"/>
    </location>
</feature>
<feature type="repeat" description="3" evidence="18">
    <location>
        <begin position="1378"/>
        <end position="1379"/>
    </location>
</feature>
<feature type="repeat" description="4" evidence="18">
    <location>
        <begin position="1415"/>
        <end position="1416"/>
    </location>
</feature>
<feature type="repeat" description="5" evidence="18">
    <location>
        <begin position="1430"/>
        <end position="1431"/>
    </location>
</feature>
<feature type="repeat" description="6" evidence="18">
    <location>
        <begin position="1439"/>
        <end position="1440"/>
    </location>
</feature>
<feature type="repeat" description="7" evidence="18">
    <location>
        <begin position="1447"/>
        <end position="1448"/>
    </location>
</feature>
<feature type="repeat" description="8" evidence="18">
    <location>
        <begin position="1464"/>
        <end position="1465"/>
    </location>
</feature>
<feature type="repeat" description="9" evidence="18">
    <location>
        <begin position="1498"/>
        <end position="1499"/>
    </location>
</feature>
<feature type="repeat" description="10" evidence="18">
    <location>
        <begin position="1528"/>
        <end position="1529"/>
    </location>
</feature>
<feature type="repeat" description="11" evidence="18">
    <location>
        <begin position="1545"/>
        <end position="1546"/>
    </location>
</feature>
<feature type="repeat" description="11" evidence="18">
    <location>
        <begin position="1562"/>
        <end position="1563"/>
    </location>
</feature>
<feature type="repeat" description="12" evidence="18">
    <location>
        <begin position="1596"/>
        <end position="1597"/>
    </location>
</feature>
<feature type="repeat" description="13" evidence="18">
    <location>
        <begin position="1604"/>
        <end position="1605"/>
    </location>
</feature>
<feature type="repeat" description="14" evidence="18">
    <location>
        <begin position="1621"/>
        <end position="1622"/>
    </location>
</feature>
<feature type="repeat" description="15" evidence="18">
    <location>
        <begin position="1638"/>
        <end position="1639"/>
    </location>
</feature>
<feature type="repeat" description="16" evidence="18">
    <location>
        <begin position="1641"/>
        <end position="1642"/>
    </location>
</feature>
<feature type="repeat" description="17" evidence="18">
    <location>
        <begin position="1680"/>
        <end position="1681"/>
    </location>
</feature>
<feature type="repeat" description="18" evidence="18">
    <location>
        <begin position="1692"/>
        <end position="1693"/>
    </location>
</feature>
<feature type="region of interest" description="Bridging helix" evidence="1">
    <location>
        <begin position="751"/>
        <end position="763"/>
    </location>
</feature>
<feature type="region of interest" description="18 X 2 AA repeats of [WG]-[GW] repeats">
    <location>
        <begin position="1215"/>
        <end position="1693"/>
    </location>
</feature>
<feature type="region of interest" description="Disordered" evidence="3">
    <location>
        <begin position="1272"/>
        <end position="1291"/>
    </location>
</feature>
<feature type="region of interest" description="Disordered" evidence="3">
    <location>
        <begin position="1298"/>
        <end position="1718"/>
    </location>
</feature>
<feature type="region of interest" description="Disordered" evidence="3">
    <location>
        <begin position="1847"/>
        <end position="1976"/>
    </location>
</feature>
<feature type="compositionally biased region" description="Basic and acidic residues" evidence="3">
    <location>
        <begin position="1281"/>
        <end position="1291"/>
    </location>
</feature>
<feature type="compositionally biased region" description="Basic and acidic residues" evidence="3">
    <location>
        <begin position="1298"/>
        <end position="1307"/>
    </location>
</feature>
<feature type="compositionally biased region" description="Polar residues" evidence="3">
    <location>
        <begin position="1332"/>
        <end position="1348"/>
    </location>
</feature>
<feature type="compositionally biased region" description="Basic and acidic residues" evidence="3">
    <location>
        <begin position="1349"/>
        <end position="1371"/>
    </location>
</feature>
<feature type="compositionally biased region" description="Basic and acidic residues" evidence="3">
    <location>
        <begin position="1415"/>
        <end position="1430"/>
    </location>
</feature>
<feature type="compositionally biased region" description="Polar residues" evidence="3">
    <location>
        <begin position="1491"/>
        <end position="1501"/>
    </location>
</feature>
<feature type="compositionally biased region" description="Basic and acidic residues" evidence="3">
    <location>
        <begin position="1648"/>
        <end position="1678"/>
    </location>
</feature>
<feature type="compositionally biased region" description="Polar residues" evidence="3">
    <location>
        <begin position="1869"/>
        <end position="1878"/>
    </location>
</feature>
<feature type="compositionally biased region" description="Low complexity" evidence="3">
    <location>
        <begin position="1886"/>
        <end position="1976"/>
    </location>
</feature>
<feature type="binding site" evidence="2">
    <location>
        <position position="57"/>
    </location>
    <ligand>
        <name>Zn(2+)</name>
        <dbReference type="ChEBI" id="CHEBI:29105"/>
        <label>1</label>
    </ligand>
</feature>
<feature type="binding site" evidence="2">
    <location>
        <position position="60"/>
    </location>
    <ligand>
        <name>Zn(2+)</name>
        <dbReference type="ChEBI" id="CHEBI:29105"/>
        <label>1</label>
    </ligand>
</feature>
<feature type="binding site" evidence="2">
    <location>
        <position position="68"/>
    </location>
    <ligand>
        <name>Zn(2+)</name>
        <dbReference type="ChEBI" id="CHEBI:29105"/>
        <label>1</label>
    </ligand>
</feature>
<feature type="binding site" evidence="2">
    <location>
        <position position="71"/>
    </location>
    <ligand>
        <name>Zn(2+)</name>
        <dbReference type="ChEBI" id="CHEBI:29105"/>
        <label>1</label>
    </ligand>
</feature>
<feature type="binding site" evidence="2">
    <location>
        <position position="98"/>
    </location>
    <ligand>
        <name>Zn(2+)</name>
        <dbReference type="ChEBI" id="CHEBI:29105"/>
        <label>2</label>
    </ligand>
</feature>
<feature type="binding site" evidence="2">
    <location>
        <position position="101"/>
    </location>
    <ligand>
        <name>Zn(2+)</name>
        <dbReference type="ChEBI" id="CHEBI:29105"/>
        <label>2</label>
    </ligand>
</feature>
<feature type="binding site" evidence="2">
    <location>
        <position position="449"/>
    </location>
    <ligand>
        <name>Mg(2+)</name>
        <dbReference type="ChEBI" id="CHEBI:18420"/>
        <note>catalytic</note>
    </ligand>
</feature>
<feature type="binding site" evidence="2">
    <location>
        <position position="451"/>
    </location>
    <ligand>
        <name>Mg(2+)</name>
        <dbReference type="ChEBI" id="CHEBI:18420"/>
        <note>catalytic</note>
    </ligand>
</feature>
<feature type="binding site" evidence="2">
    <location>
        <position position="453"/>
    </location>
    <ligand>
        <name>Mg(2+)</name>
        <dbReference type="ChEBI" id="CHEBI:18420"/>
        <note>catalytic</note>
    </ligand>
</feature>
<feature type="mutagenesis site" description="In nrpe1-12; decreased DNA methylation." evidence="19">
    <original>G</original>
    <variation>R</variation>
    <location>
        <position position="49"/>
    </location>
</feature>
<feature type="mutagenesis site" description="In nrpe1-3/drd3-3; loss of CNN DNA methylation, but no effect on interaction with NRPE5A." evidence="16">
    <original>D</original>
    <variation>N</variation>
    <location>
        <position position="451"/>
    </location>
</feature>
<dbReference type="EC" id="2.7.7.6"/>
<dbReference type="EMBL" id="AY826516">
    <property type="protein sequence ID" value="AAX12373.1"/>
    <property type="molecule type" value="mRNA"/>
</dbReference>
<dbReference type="EMBL" id="AY927744">
    <property type="protein sequence ID" value="AAY15198.1"/>
    <property type="molecule type" value="mRNA"/>
</dbReference>
<dbReference type="EMBL" id="DQ020656">
    <property type="protein sequence ID" value="AAY89362.1"/>
    <property type="molecule type" value="mRNA"/>
</dbReference>
<dbReference type="EMBL" id="AF002109">
    <property type="protein sequence ID" value="AAB95288.1"/>
    <property type="status" value="ALT_SEQ"/>
    <property type="molecule type" value="Genomic_DNA"/>
</dbReference>
<dbReference type="EMBL" id="AF002109">
    <property type="protein sequence ID" value="AAB95289.1"/>
    <property type="status" value="ALT_SEQ"/>
    <property type="molecule type" value="Genomic_DNA"/>
</dbReference>
<dbReference type="EMBL" id="CP002685">
    <property type="protein sequence ID" value="AEC09767.1"/>
    <property type="molecule type" value="Genomic_DNA"/>
</dbReference>
<dbReference type="PIR" id="D84824">
    <property type="entry name" value="D84824"/>
</dbReference>
<dbReference type="PIR" id="E84824">
    <property type="entry name" value="E84824"/>
</dbReference>
<dbReference type="RefSeq" id="NP_181532.2">
    <property type="nucleotide sequence ID" value="NM_129561.4"/>
</dbReference>
<dbReference type="PDB" id="8HYJ">
    <property type="method" value="EM"/>
    <property type="resolution" value="4.30 A"/>
    <property type="chains" value="A=1-1976"/>
</dbReference>
<dbReference type="PDBsum" id="8HYJ"/>
<dbReference type="EMDB" id="EMD-35086"/>
<dbReference type="SMR" id="Q5D869"/>
<dbReference type="BioGRID" id="3929">
    <property type="interactions" value="30"/>
</dbReference>
<dbReference type="DIP" id="DIP-48678N"/>
<dbReference type="FunCoup" id="Q5D869">
    <property type="interactions" value="1040"/>
</dbReference>
<dbReference type="IntAct" id="Q5D869">
    <property type="interactions" value="3"/>
</dbReference>
<dbReference type="MINT" id="Q5D869"/>
<dbReference type="STRING" id="3702.Q5D869"/>
<dbReference type="GlyGen" id="Q5D869">
    <property type="glycosylation" value="1 site"/>
</dbReference>
<dbReference type="iPTMnet" id="Q5D869"/>
<dbReference type="PaxDb" id="3702-AT2G40030.1"/>
<dbReference type="ProteomicsDB" id="250480"/>
<dbReference type="EnsemblPlants" id="AT2G40030.1">
    <property type="protein sequence ID" value="AT2G40030.1"/>
    <property type="gene ID" value="AT2G40030"/>
</dbReference>
<dbReference type="GeneID" id="818591"/>
<dbReference type="Gramene" id="AT2G40030.1">
    <property type="protein sequence ID" value="AT2G40030.1"/>
    <property type="gene ID" value="AT2G40030"/>
</dbReference>
<dbReference type="KEGG" id="ath:AT2G40030"/>
<dbReference type="Araport" id="AT2G40030"/>
<dbReference type="TAIR" id="AT2G40030">
    <property type="gene designation" value="NRPD1B"/>
</dbReference>
<dbReference type="eggNOG" id="KOG0260">
    <property type="taxonomic scope" value="Eukaryota"/>
</dbReference>
<dbReference type="eggNOG" id="KOG2992">
    <property type="taxonomic scope" value="Eukaryota"/>
</dbReference>
<dbReference type="HOGENOM" id="CLU_002449_2_0_1"/>
<dbReference type="InParanoid" id="Q5D869"/>
<dbReference type="PhylomeDB" id="Q5D869"/>
<dbReference type="PRO" id="PR:Q5D869"/>
<dbReference type="Proteomes" id="UP000006548">
    <property type="component" value="Chromosome 2"/>
</dbReference>
<dbReference type="ExpressionAtlas" id="Q5D869">
    <property type="expression patterns" value="baseline and differential"/>
</dbReference>
<dbReference type="GO" id="GO:0005739">
    <property type="term" value="C:mitochondrion"/>
    <property type="evidence" value="ECO:0007669"/>
    <property type="project" value="GOC"/>
</dbReference>
<dbReference type="GO" id="GO:0016604">
    <property type="term" value="C:nuclear body"/>
    <property type="evidence" value="ECO:0000314"/>
    <property type="project" value="TAIR"/>
</dbReference>
<dbReference type="GO" id="GO:0005730">
    <property type="term" value="C:nucleolus"/>
    <property type="evidence" value="ECO:0000314"/>
    <property type="project" value="TAIR"/>
</dbReference>
<dbReference type="GO" id="GO:0005634">
    <property type="term" value="C:nucleus"/>
    <property type="evidence" value="ECO:0000314"/>
    <property type="project" value="UniProtKB"/>
</dbReference>
<dbReference type="GO" id="GO:0009536">
    <property type="term" value="C:plastid"/>
    <property type="evidence" value="ECO:0007669"/>
    <property type="project" value="GOC"/>
</dbReference>
<dbReference type="GO" id="GO:0030880">
    <property type="term" value="C:RNA polymerase complex"/>
    <property type="evidence" value="ECO:0000314"/>
    <property type="project" value="TAIR"/>
</dbReference>
<dbReference type="GO" id="GO:0000418">
    <property type="term" value="C:RNA polymerase IV complex"/>
    <property type="evidence" value="ECO:0000314"/>
    <property type="project" value="TAIR"/>
</dbReference>
<dbReference type="GO" id="GO:0000419">
    <property type="term" value="C:RNA polymerase V complex"/>
    <property type="evidence" value="ECO:0000314"/>
    <property type="project" value="UniProtKB"/>
</dbReference>
<dbReference type="GO" id="GO:0003677">
    <property type="term" value="F:DNA binding"/>
    <property type="evidence" value="ECO:0007669"/>
    <property type="project" value="InterPro"/>
</dbReference>
<dbReference type="GO" id="GO:0003899">
    <property type="term" value="F:DNA-directed RNA polymerase activity"/>
    <property type="evidence" value="ECO:0000250"/>
    <property type="project" value="TAIR"/>
</dbReference>
<dbReference type="GO" id="GO:0046872">
    <property type="term" value="F:metal ion binding"/>
    <property type="evidence" value="ECO:0007669"/>
    <property type="project" value="UniProtKB-KW"/>
</dbReference>
<dbReference type="GO" id="GO:0050832">
    <property type="term" value="P:defense response to fungus"/>
    <property type="evidence" value="ECO:0000315"/>
    <property type="project" value="TAIR"/>
</dbReference>
<dbReference type="GO" id="GO:0006351">
    <property type="term" value="P:DNA-templated transcription"/>
    <property type="evidence" value="ECO:0007669"/>
    <property type="project" value="InterPro"/>
</dbReference>
<dbReference type="GO" id="GO:0035194">
    <property type="term" value="P:regulatory ncRNA-mediated post-transcriptional gene silencing"/>
    <property type="evidence" value="ECO:0000315"/>
    <property type="project" value="TAIR"/>
</dbReference>
<dbReference type="GO" id="GO:0030422">
    <property type="term" value="P:siRNA processing"/>
    <property type="evidence" value="ECO:0000315"/>
    <property type="project" value="TAIR"/>
</dbReference>
<dbReference type="CDD" id="cd02737">
    <property type="entry name" value="RNAP_IV_NRPD1_C"/>
    <property type="match status" value="1"/>
</dbReference>
<dbReference type="CDD" id="cd10506">
    <property type="entry name" value="RNAP_IV_RPD1_N"/>
    <property type="match status" value="1"/>
</dbReference>
<dbReference type="FunFam" id="4.10.860.120:FF:000008">
    <property type="entry name" value="DNA-directed RNA polymerase subunit"/>
    <property type="match status" value="1"/>
</dbReference>
<dbReference type="Gene3D" id="2.40.40.20">
    <property type="match status" value="1"/>
</dbReference>
<dbReference type="Gene3D" id="3.10.450.40">
    <property type="match status" value="1"/>
</dbReference>
<dbReference type="Gene3D" id="3.30.1490.180">
    <property type="entry name" value="RNA polymerase ii"/>
    <property type="match status" value="1"/>
</dbReference>
<dbReference type="Gene3D" id="4.10.860.120">
    <property type="entry name" value="RNA polymerase II, clamp domain"/>
    <property type="match status" value="1"/>
</dbReference>
<dbReference type="Gene3D" id="1.10.274.100">
    <property type="entry name" value="RNA polymerase Rpb1, domain 3"/>
    <property type="match status" value="1"/>
</dbReference>
<dbReference type="InterPro" id="IPR045867">
    <property type="entry name" value="DNA-dir_RpoC_beta_prime"/>
</dbReference>
<dbReference type="InterPro" id="IPR040402">
    <property type="entry name" value="NRPD1_C"/>
</dbReference>
<dbReference type="InterPro" id="IPR040403">
    <property type="entry name" value="NRPD1_N"/>
</dbReference>
<dbReference type="InterPro" id="IPR000722">
    <property type="entry name" value="RNA_pol_asu"/>
</dbReference>
<dbReference type="InterPro" id="IPR006592">
    <property type="entry name" value="RNA_pol_N"/>
</dbReference>
<dbReference type="InterPro" id="IPR007066">
    <property type="entry name" value="RNA_pol_Rpb1_3"/>
</dbReference>
<dbReference type="InterPro" id="IPR042102">
    <property type="entry name" value="RNA_pol_Rpb1_3_sf"/>
</dbReference>
<dbReference type="InterPro" id="IPR007081">
    <property type="entry name" value="RNA_pol_Rpb1_5"/>
</dbReference>
<dbReference type="InterPro" id="IPR044893">
    <property type="entry name" value="RNA_pol_Rpb1_clamp_domain"/>
</dbReference>
<dbReference type="PANTHER" id="PTHR19376">
    <property type="entry name" value="DNA-DIRECTED RNA POLYMERASE"/>
    <property type="match status" value="1"/>
</dbReference>
<dbReference type="PANTHER" id="PTHR19376:SF51">
    <property type="entry name" value="DNA-DIRECTED RNA POLYMERASE V SUBUNIT 1"/>
    <property type="match status" value="1"/>
</dbReference>
<dbReference type="Pfam" id="PF11523">
    <property type="entry name" value="DUF3223"/>
    <property type="match status" value="1"/>
</dbReference>
<dbReference type="Pfam" id="PF00623">
    <property type="entry name" value="RNA_pol_Rpb1_2"/>
    <property type="match status" value="1"/>
</dbReference>
<dbReference type="Pfam" id="PF04983">
    <property type="entry name" value="RNA_pol_Rpb1_3"/>
    <property type="match status" value="1"/>
</dbReference>
<dbReference type="Pfam" id="PF04998">
    <property type="entry name" value="RNA_pol_Rpb1_5"/>
    <property type="match status" value="1"/>
</dbReference>
<dbReference type="SMART" id="SM00663">
    <property type="entry name" value="RPOLA_N"/>
    <property type="match status" value="1"/>
</dbReference>
<dbReference type="SUPFAM" id="SSF64484">
    <property type="entry name" value="beta and beta-prime subunits of DNA dependent RNA-polymerase"/>
    <property type="match status" value="1"/>
</dbReference>
<evidence type="ECO:0000250" key="1"/>
<evidence type="ECO:0000250" key="2">
    <source>
        <dbReference type="UniProtKB" id="P04050"/>
    </source>
</evidence>
<evidence type="ECO:0000256" key="3">
    <source>
        <dbReference type="SAM" id="MobiDB-lite"/>
    </source>
</evidence>
<evidence type="ECO:0000269" key="4">
    <source>
    </source>
</evidence>
<evidence type="ECO:0000269" key="5">
    <source>
    </source>
</evidence>
<evidence type="ECO:0000269" key="6">
    <source>
    </source>
</evidence>
<evidence type="ECO:0000269" key="7">
    <source>
    </source>
</evidence>
<evidence type="ECO:0000269" key="8">
    <source>
    </source>
</evidence>
<evidence type="ECO:0000269" key="9">
    <source>
    </source>
</evidence>
<evidence type="ECO:0000269" key="10">
    <source>
    </source>
</evidence>
<evidence type="ECO:0000269" key="11">
    <source>
    </source>
</evidence>
<evidence type="ECO:0000269" key="12">
    <source>
    </source>
</evidence>
<evidence type="ECO:0000269" key="13">
    <source>
    </source>
</evidence>
<evidence type="ECO:0000269" key="14">
    <source>
    </source>
</evidence>
<evidence type="ECO:0000269" key="15">
    <source>
    </source>
</evidence>
<evidence type="ECO:0000269" key="16">
    <source>
    </source>
</evidence>
<evidence type="ECO:0000269" key="17">
    <source>
    </source>
</evidence>
<evidence type="ECO:0000269" key="18">
    <source>
    </source>
</evidence>
<evidence type="ECO:0000269" key="19">
    <source>
    </source>
</evidence>
<evidence type="ECO:0000269" key="20">
    <source>
    </source>
</evidence>
<evidence type="ECO:0000305" key="21"/>
<organism>
    <name type="scientific">Arabidopsis thaliana</name>
    <name type="common">Mouse-ear cress</name>
    <dbReference type="NCBI Taxonomy" id="3702"/>
    <lineage>
        <taxon>Eukaryota</taxon>
        <taxon>Viridiplantae</taxon>
        <taxon>Streptophyta</taxon>
        <taxon>Embryophyta</taxon>
        <taxon>Tracheophyta</taxon>
        <taxon>Spermatophyta</taxon>
        <taxon>Magnoliopsida</taxon>
        <taxon>eudicotyledons</taxon>
        <taxon>Gunneridae</taxon>
        <taxon>Pentapetalae</taxon>
        <taxon>rosids</taxon>
        <taxon>malvids</taxon>
        <taxon>Brassicales</taxon>
        <taxon>Brassicaceae</taxon>
        <taxon>Camelineae</taxon>
        <taxon>Arabidopsis</taxon>
    </lineage>
</organism>
<sequence length="1976" mass="218228">MEEESTSEILDGEIVGITFALASHHEICIQSISESAINHPSQLTNAFLGLPLEFGKCESCGATEPDKCEGHFGYIQLPVPIYHPAHVNELKQMLSLLCLKCLKIKKAKGTSGGLADRLLGVCCEEASQISIKDRASDGASYLELKLPSRSRLQPGCWNFLERYGYRYGSDYTRPLLAREVKEILRRIPEESRKKLTAKGHIPQEGYILEYLPVPPNCLSVPEASDGFSTMSVDPSRIELKDVLKKVIAIKSSRSGETNFESHKAEASEMFRVVDTYLQVRGTAKAARNIDMRYGVSKISDSSSSKAWTEKMRTLFIRKGSGFSSRSVITGDAYRHVNEVGIPIEIAQRITFEERVSVHNRGYLQKLVDDKLCLSYTQGSTTYSLRDGSKGHTELKPGQVVHRRVMDGDVVFINRPPTTHKHSLQALRVYVHEDNTVKINPLMCSPLSADFDGDCVHLFYPQSLSAKAEVMELFSVEKQLLSSHTGQLILQMGSDSLLSLRVMLERVFLDKATAQQLAMYGSLSLPPPALRKSSKSGPAWTVFQILQLAFPERLSCKGDRFLVDGSDLLKFDFGVDAMGSIINEIVTSIFLEKGPKETLGFFDSLQPLLMESLFAEGFSLSLEDLSMSRADMDVIHNLIIREISPMVSRLRLSYRDELQLENSIHKVKEVAANFMLKSYSIRNLIDIKSNSAITKLVQQTGFLGLQLSDKKKFYTKTLVEDMAIFCKRKYGRISSSGDFGIVKGCFFHGLDPYEEMAHSIAAREVIVRSSRGLAEPGTLFKNLMAVLRDIVITNDGTVRNTCSNSVIQFKYGVDSERGHQGLFEAGEPVGVLAATAMSNPAYKAVLDSSPNSNSSWELMKEVLLCKVNFQNTTNDRRVILYLNECHCGKRFCQENAACTVRNKLNKVSLKDTAVEFLVEYRKQPTISEIFGIDSCLHGHIHLNKTLLQDWNISMQDIHQKCEDVINSLGQKKKKKATDDFKRTSLSVSECCSFRDPCGSKGSDMPCLTFSYNATDPDLERTLDVLCNTVYPVLLEIVIKGDSRICSANIIWNSSDMTTWIRNRHASRRGEWVLDVTVEKSAVKQSGDAWRVVIDSCLSVLHLIDTKRSIPYSVKQVQELLGLSCAFEQAVQRLSASVRMVSKGVLKEHIILLANNMTCSGTMLGFNSGGYKALTRSLNIKAPFTEATLIAPRKCFEKAAEKCHTDSLSTVVGSCSWGKRVDVGTGSQFELLWNQKETGLDDKEETDVYSFLQMVISTTNADAFVSSPGFDVTEEEMAEWAESPERDSALGEPKFEDSADFQNLHDEGKPSGANWEKSSSWDNGCSGGSEWGVSKSTGGEANPESNWEKTTNVEKEDAWSSWNTRKDAQESSKSDSGGAWGIKTKDADADTTPNWETSPAPKDSIVPENNEPTSDVWGHKSVSDKSWDKKNWGTESAPAAWGSTDAAVWGSSDKKNSETESDAAAWGSRDKNNSDVGSGAGVLGPWNKKSSETESNGATWGSSDKTKSGAAAWNSWDKKNIETDSEPAAWGSQGKKNSETESGPAAWGAWDKKKSETEPGPAGWGMGDKKNSETELGPAAMGNWDKKKSDTKSGPAAWGSTDAAAWGSSDKNNSETESDAAAWGSRNKKTSEIESGAGAWGSWGQPSPTAEDKDTNEDDRNPWVSLKETKSREKDDKERSQWGNPAKKFPSSGGWSNGGGADWKGNRNHTPRPPRSEDNLAPMFTATRQRLDSFTSEEQELLSDVEPVMRTLRKIMHPSAYPDGDPISDDDKTFVLEKILNFHPQKETKLGSGVDFITVDKHTIFSDSRCFFVVSTDGAKQDFSYRKSLNNYLMKKYPDRAEEFIDKYFTKPRPSGNRDRNNQDATPPGEEQSQPPNQSIGNGGDDFQTQTQSQSPSQTRAQSPSQAQAQSPSQTQSQSQSQSQSQSQSQSQSQSQSQSQSQSQSQSQSPSQTQTQSPSQTQAQAQSPSSQSPSQTQT</sequence>
<comment type="function">
    <text evidence="4 5 6 7 10 11 12 13 15 16 19 20">DNA-dependent RNA polymerase catalyzes the transcription of DNA into RNA using the four ribonucleoside triphosphates as substrates. Largest and catalytic component of RNA polymerase V involved in RNA-directed DNA methylation-dependent (RdDM) silencing of endogenous repeated sequences, including transposable elements. Also required for full erasure of methylation when the RNA trigger is withdrawn. Seems also involved in the synthesis of short-interfering RNAs (siRNA). Essential component of a self-reinforcing loop coupling de novo DNA methylation to siRNA production. Involved in the maintenance of post-transcriptional RNA silencing.</text>
</comment>
<comment type="catalytic activity">
    <reaction>
        <text>RNA(n) + a ribonucleoside 5'-triphosphate = RNA(n+1) + diphosphate</text>
        <dbReference type="Rhea" id="RHEA:21248"/>
        <dbReference type="Rhea" id="RHEA-COMP:14527"/>
        <dbReference type="Rhea" id="RHEA-COMP:17342"/>
        <dbReference type="ChEBI" id="CHEBI:33019"/>
        <dbReference type="ChEBI" id="CHEBI:61557"/>
        <dbReference type="ChEBI" id="CHEBI:140395"/>
        <dbReference type="EC" id="2.7.7.6"/>
    </reaction>
</comment>
<comment type="subunit">
    <text evidence="6 7 8 15 17 20">Component of the RNA polymerase V complex. Interacts with NRPD4, NRPD2A, and (via C-terminus) with AGO4. Interacts with SUVH2.</text>
</comment>
<comment type="interaction">
    <interactant intactId="EBI-2352263">
        <id>Q5D869</id>
    </interactant>
    <interactant intactId="EBI-2352199">
        <id>Q9ZVD5</id>
        <label>AGO4</label>
    </interactant>
    <organismsDiffer>false</organismsDiffer>
    <experiments>3</experiments>
</comment>
<comment type="interaction">
    <interactant intactId="EBI-2352263">
        <id>Q5D869</id>
    </interactant>
    <interactant intactId="EBI-15751359">
        <id>Q9M1J2</id>
        <label>NRPE5A</label>
    </interactant>
    <organismsDiffer>false</organismsDiffer>
    <experiments>2</experiments>
</comment>
<comment type="subcellular location">
    <subcellularLocation>
        <location evidence="6 7 8 17">Nucleus</location>
        <location evidence="6 7 8 17">Nucleolus</location>
    </subcellularLocation>
    <text>Clustered within heterochromatic regions and colocalized with RDR2, DCL3, NRPD4, AGO4, and siRNAs within the nucleolus. Recruited to chromatin via its interaction with SUVH2.</text>
</comment>
<comment type="tissue specificity">
    <text evidence="6 9 14">Mostly expressed in flowers, and, to a lower extent, in leaves. Present in sperm cells.</text>
</comment>
<comment type="domain">
    <text>WG/GW repeats are involved in AGO4 binding.</text>
</comment>
<comment type="disruption phenotype">
    <text evidence="4 5 6 7 11 12 13 15 19">Blocked in the perpetuation of CNN, CG and CNG methylation in repeated endogenous DNA accompanied by a reduction in 24-nt siRNAs. Reduction of heterochromatin association into chromocenters, coincident with losses in cytosine methylation at pericentromeric 5S gene clusters and AtSN1 retroelements. Impaired RNA-directed DNA methylation-dependent (RdDM) silencing. Defective in the maintenance of post-transcriptional RNA silencing.</text>
</comment>
<comment type="similarity">
    <text evidence="21">Belongs to the RNA polymerase beta' chain family.</text>
</comment>
<comment type="sequence caution" evidence="21">
    <conflict type="erroneous gene model prediction">
        <sequence resource="EMBL-CDS" id="AAB95288"/>
    </conflict>
</comment>
<comment type="sequence caution" evidence="21">
    <conflict type="erroneous gene model prediction">
        <sequence resource="EMBL-CDS" id="AAB95289"/>
    </conflict>
</comment>
<proteinExistence type="evidence at protein level"/>